<protein>
    <recommendedName>
        <fullName evidence="6">Fluoride export protein 2</fullName>
    </recommendedName>
</protein>
<reference key="1">
    <citation type="journal article" date="1997" name="Nature">
        <title>The nucleotide sequence of Saccharomyces cerevisiae chromosome XVI.</title>
        <authorList>
            <person name="Bussey H."/>
            <person name="Storms R.K."/>
            <person name="Ahmed A."/>
            <person name="Albermann K."/>
            <person name="Allen E."/>
            <person name="Ansorge W."/>
            <person name="Araujo R."/>
            <person name="Aparicio A."/>
            <person name="Barrell B.G."/>
            <person name="Badcock K."/>
            <person name="Benes V."/>
            <person name="Botstein D."/>
            <person name="Bowman S."/>
            <person name="Brueckner M."/>
            <person name="Carpenter J."/>
            <person name="Cherry J.M."/>
            <person name="Chung E."/>
            <person name="Churcher C.M."/>
            <person name="Coster F."/>
            <person name="Davis K."/>
            <person name="Davis R.W."/>
            <person name="Dietrich F.S."/>
            <person name="Delius H."/>
            <person name="DiPaolo T."/>
            <person name="Dubois E."/>
            <person name="Duesterhoeft A."/>
            <person name="Duncan M."/>
            <person name="Floeth M."/>
            <person name="Fortin N."/>
            <person name="Friesen J.D."/>
            <person name="Fritz C."/>
            <person name="Goffeau A."/>
            <person name="Hall J."/>
            <person name="Hebling U."/>
            <person name="Heumann K."/>
            <person name="Hilbert H."/>
            <person name="Hillier L.W."/>
            <person name="Hunicke-Smith S."/>
            <person name="Hyman R.W."/>
            <person name="Johnston M."/>
            <person name="Kalman S."/>
            <person name="Kleine K."/>
            <person name="Komp C."/>
            <person name="Kurdi O."/>
            <person name="Lashkari D."/>
            <person name="Lew H."/>
            <person name="Lin A."/>
            <person name="Lin D."/>
            <person name="Louis E.J."/>
            <person name="Marathe R."/>
            <person name="Messenguy F."/>
            <person name="Mewes H.-W."/>
            <person name="Mirtipati S."/>
            <person name="Moestl D."/>
            <person name="Mueller-Auer S."/>
            <person name="Namath A."/>
            <person name="Nentwich U."/>
            <person name="Oefner P."/>
            <person name="Pearson D."/>
            <person name="Petel F.X."/>
            <person name="Pohl T.M."/>
            <person name="Purnelle B."/>
            <person name="Rajandream M.A."/>
            <person name="Rechmann S."/>
            <person name="Rieger M."/>
            <person name="Riles L."/>
            <person name="Roberts D."/>
            <person name="Schaefer M."/>
            <person name="Scharfe M."/>
            <person name="Scherens B."/>
            <person name="Schramm S."/>
            <person name="Schroeder M."/>
            <person name="Sdicu A.-M."/>
            <person name="Tettelin H."/>
            <person name="Urrestarazu L.A."/>
            <person name="Ushinsky S."/>
            <person name="Vierendeels F."/>
            <person name="Vissers S."/>
            <person name="Voss H."/>
            <person name="Walsh S.V."/>
            <person name="Wambutt R."/>
            <person name="Wang Y."/>
            <person name="Wedler E."/>
            <person name="Wedler H."/>
            <person name="Winnett E."/>
            <person name="Zhong W.-W."/>
            <person name="Zollner A."/>
            <person name="Vo D.H."/>
            <person name="Hani J."/>
        </authorList>
    </citation>
    <scope>NUCLEOTIDE SEQUENCE [LARGE SCALE GENOMIC DNA]</scope>
    <source>
        <strain>ATCC 204508 / S288c</strain>
    </source>
</reference>
<reference key="2">
    <citation type="journal article" date="2014" name="G3 (Bethesda)">
        <title>The reference genome sequence of Saccharomyces cerevisiae: Then and now.</title>
        <authorList>
            <person name="Engel S.R."/>
            <person name="Dietrich F.S."/>
            <person name="Fisk D.G."/>
            <person name="Binkley G."/>
            <person name="Balakrishnan R."/>
            <person name="Costanzo M.C."/>
            <person name="Dwight S.S."/>
            <person name="Hitz B.C."/>
            <person name="Karra K."/>
            <person name="Nash R.S."/>
            <person name="Weng S."/>
            <person name="Wong E.D."/>
            <person name="Lloyd P."/>
            <person name="Skrzypek M.S."/>
            <person name="Miyasato S.R."/>
            <person name="Simison M."/>
            <person name="Cherry J.M."/>
        </authorList>
    </citation>
    <scope>GENOME REANNOTATION</scope>
    <source>
        <strain>ATCC 204508 / S288c</strain>
    </source>
</reference>
<reference key="3">
    <citation type="journal article" date="2013" name="Proc. Natl. Acad. Sci. U.S.A.">
        <title>Eukaryotic resistance to fluoride toxicity mediated by a widespread family of fluoride export proteins.</title>
        <authorList>
            <person name="Li S."/>
            <person name="Smith K.D."/>
            <person name="Davis J.H."/>
            <person name="Gordon P.B."/>
            <person name="Breaker R.R."/>
            <person name="Strobel S.A."/>
        </authorList>
    </citation>
    <scope>FUNCTION</scope>
    <scope>DISRUPTION PHENOTYPE</scope>
</reference>
<reference key="4">
    <citation type="journal article" date="2015" name="J. Biol. Chem.">
        <title>Yeast Fex1p is a constitutively expressed fluoride channel with functional asymmetry of its two homologous domains.</title>
        <authorList>
            <person name="Smith K.D."/>
            <person name="Gordon P.B."/>
            <person name="Rivetta A."/>
            <person name="Allen K.E."/>
            <person name="Berbasova T."/>
            <person name="Slayman C."/>
            <person name="Strobel S.A."/>
        </authorList>
    </citation>
    <scope>FUNCTION</scope>
    <scope>TRANSPORTER ACTIVITY</scope>
    <scope>SUBCELLULAR LOCATION</scope>
    <scope>LEVEL OF PROTEIN EXPRESSION</scope>
</reference>
<gene>
    <name evidence="6" type="primary">FEX2</name>
    <name evidence="9" type="ordered locus">YPL279C</name>
</gene>
<keyword id="KW-1003">Cell membrane</keyword>
<keyword id="KW-0325">Glycoprotein</keyword>
<keyword id="KW-0472">Membrane</keyword>
<keyword id="KW-1185">Reference proteome</keyword>
<keyword id="KW-0812">Transmembrane</keyword>
<keyword id="KW-1133">Transmembrane helix</keyword>
<accession>Q08991</accession>
<accession>D6W393</accession>
<organism>
    <name type="scientific">Saccharomyces cerevisiae (strain ATCC 204508 / S288c)</name>
    <name type="common">Baker's yeast</name>
    <dbReference type="NCBI Taxonomy" id="559292"/>
    <lineage>
        <taxon>Eukaryota</taxon>
        <taxon>Fungi</taxon>
        <taxon>Dikarya</taxon>
        <taxon>Ascomycota</taxon>
        <taxon>Saccharomycotina</taxon>
        <taxon>Saccharomycetes</taxon>
        <taxon>Saccharomycetales</taxon>
        <taxon>Saccharomycetaceae</taxon>
        <taxon>Saccharomyces</taxon>
    </lineage>
</organism>
<name>FEX2_YEAST</name>
<feature type="chain" id="PRO_0000255979" description="Fluoride export protein 2">
    <location>
        <begin position="1"/>
        <end position="375"/>
    </location>
</feature>
<feature type="topological domain" description="Cytoplasmic" evidence="1">
    <location>
        <begin position="1"/>
        <end position="11"/>
    </location>
</feature>
<feature type="transmembrane region" description="Helical" evidence="2">
    <location>
        <begin position="12"/>
        <end position="32"/>
    </location>
</feature>
<feature type="topological domain" description="Extracellular" evidence="1">
    <location>
        <begin position="33"/>
        <end position="34"/>
    </location>
</feature>
<feature type="transmembrane region" description="Helical" evidence="2">
    <location>
        <begin position="35"/>
        <end position="55"/>
    </location>
</feature>
<feature type="topological domain" description="Cytoplasmic" evidence="1 7">
    <location>
        <begin position="56"/>
        <end position="79"/>
    </location>
</feature>
<feature type="transmembrane region" description="Helical" evidence="2">
    <location>
        <begin position="80"/>
        <end position="100"/>
    </location>
</feature>
<feature type="topological domain" description="Extracellular" evidence="1">
    <location>
        <begin position="101"/>
        <end position="127"/>
    </location>
</feature>
<feature type="transmembrane region" description="Helical" evidence="2">
    <location>
        <begin position="128"/>
        <end position="148"/>
    </location>
</feature>
<feature type="topological domain" description="Cytoplasmic" evidence="1">
    <location>
        <begin position="149"/>
        <end position="213"/>
    </location>
</feature>
<feature type="transmembrane region" description="Helical" evidence="2">
    <location>
        <begin position="214"/>
        <end position="234"/>
    </location>
</feature>
<feature type="topological domain" description="Extracellular" evidence="1">
    <location>
        <begin position="235"/>
        <end position="241"/>
    </location>
</feature>
<feature type="transmembrane region" description="Helical" evidence="2">
    <location>
        <begin position="242"/>
        <end position="262"/>
    </location>
</feature>
<feature type="topological domain" description="Cytoplasmic" evidence="1">
    <location>
        <begin position="263"/>
        <end position="268"/>
    </location>
</feature>
<feature type="transmembrane region" description="Helical" evidence="2">
    <location>
        <begin position="269"/>
        <end position="289"/>
    </location>
</feature>
<feature type="topological domain" description="Extracellular" evidence="1">
    <location>
        <begin position="290"/>
        <end position="310"/>
    </location>
</feature>
<feature type="transmembrane region" description="Helical" evidence="2">
    <location>
        <begin position="311"/>
        <end position="331"/>
    </location>
</feature>
<feature type="topological domain" description="Cytoplasmic" evidence="1">
    <location>
        <begin position="332"/>
        <end position="338"/>
    </location>
</feature>
<feature type="transmembrane region" description="Helical" evidence="2">
    <location>
        <begin position="339"/>
        <end position="359"/>
    </location>
</feature>
<feature type="topological domain" description="Extracellular" evidence="1">
    <location>
        <begin position="360"/>
        <end position="375"/>
    </location>
</feature>
<feature type="glycosylation site" description="N-linked (GlcNAc...) asparagine" evidence="3">
    <location>
        <position position="109"/>
    </location>
</feature>
<feature type="glycosylation site" description="N-linked (GlcNAc...) asparagine" evidence="3">
    <location>
        <position position="117"/>
    </location>
</feature>
<feature type="glycosylation site" description="N-linked (GlcNAc...) asparagine" evidence="3">
    <location>
        <position position="235"/>
    </location>
</feature>
<proteinExistence type="evidence at protein level"/>
<sequence>MIFNPVISNHKLSHYIHVFCTFTTFCILGTETRQAITALSTYTPAFVTAPTVLWSNCSSCMLMGIMQSLNAYTWMKDHQVLFLGVTTGYCGALSSFSSMLLEMFEHSTNLTNGNIANHTKLPNRAYGIMEFLSVLLVHLMVSMGSLIFGRQLGKEVIVAYGSSSFSKPYTPPSDTVKENAGDVDTQEMEKNILEFKFKTPAPFFKKFFDVVDKLAYALAFPLIILFVVLCAYYENYSRGKWTLPCLFGIFAGFLRYWLAEMFNKTNKKFPLGTFLANVFATLLIGIFTMVQRGKKHFSTDIPIVNSLNSCHIVSALISGFCGTLSTISTFINEGYKLSFINMLIYYTVSIGISYCLLVITLGSYAWTRGLTNPIC</sequence>
<dbReference type="EMBL" id="Z73635">
    <property type="protein sequence ID" value="CAA98016.1"/>
    <property type="molecule type" value="Genomic_DNA"/>
</dbReference>
<dbReference type="EMBL" id="BK006949">
    <property type="protein sequence ID" value="DAA11159.1"/>
    <property type="molecule type" value="Genomic_DNA"/>
</dbReference>
<dbReference type="PIR" id="S65312">
    <property type="entry name" value="S65312"/>
</dbReference>
<dbReference type="RefSeq" id="NP_015044.1">
    <property type="nucleotide sequence ID" value="NM_001184093.1"/>
</dbReference>
<dbReference type="SMR" id="Q08991"/>
<dbReference type="BioGRID" id="35936">
    <property type="interactions" value="62"/>
</dbReference>
<dbReference type="FunCoup" id="Q08991">
    <property type="interactions" value="124"/>
</dbReference>
<dbReference type="STRING" id="4932.YPL279C"/>
<dbReference type="TCDB" id="1.A.43.2.5">
    <property type="family name" value="the camphor resistance or fluoride exporter (fluc) family"/>
</dbReference>
<dbReference type="GlyCosmos" id="Q08991">
    <property type="glycosylation" value="3 sites, No reported glycans"/>
</dbReference>
<dbReference type="GlyGen" id="Q08991">
    <property type="glycosylation" value="3 sites"/>
</dbReference>
<dbReference type="iPTMnet" id="Q08991"/>
<dbReference type="PaxDb" id="4932-YPL279C"/>
<dbReference type="EnsemblFungi" id="YPL279C_mRNA">
    <property type="protein sequence ID" value="YPL279C"/>
    <property type="gene ID" value="YPL279C"/>
</dbReference>
<dbReference type="GeneID" id="855850"/>
<dbReference type="KEGG" id="sce:YPL279C"/>
<dbReference type="AGR" id="SGD:S000006200"/>
<dbReference type="SGD" id="S000006200">
    <property type="gene designation" value="FEX2"/>
</dbReference>
<dbReference type="VEuPathDB" id="FungiDB:YPL279C"/>
<dbReference type="eggNOG" id="ENOG502QT5F">
    <property type="taxonomic scope" value="Eukaryota"/>
</dbReference>
<dbReference type="GeneTree" id="ENSGT00940000176800"/>
<dbReference type="HOGENOM" id="CLU_030507_1_2_1"/>
<dbReference type="InParanoid" id="Q08991"/>
<dbReference type="OMA" id="ADGYCGC"/>
<dbReference type="OrthoDB" id="409792at2759"/>
<dbReference type="BioCyc" id="YEAST:G3O-34160-MONOMER"/>
<dbReference type="BioGRID-ORCS" id="855850">
    <property type="hits" value="0 hits in 10 CRISPR screens"/>
</dbReference>
<dbReference type="PRO" id="PR:Q08991"/>
<dbReference type="Proteomes" id="UP000002311">
    <property type="component" value="Chromosome XVI"/>
</dbReference>
<dbReference type="RNAct" id="Q08991">
    <property type="molecule type" value="protein"/>
</dbReference>
<dbReference type="GO" id="GO:0071944">
    <property type="term" value="C:cell periphery"/>
    <property type="evidence" value="ECO:0007005"/>
    <property type="project" value="SGD"/>
</dbReference>
<dbReference type="GO" id="GO:0005886">
    <property type="term" value="C:plasma membrane"/>
    <property type="evidence" value="ECO:0000314"/>
    <property type="project" value="SGD"/>
</dbReference>
<dbReference type="GO" id="GO:1903425">
    <property type="term" value="F:fluoride transmembrane transporter activity"/>
    <property type="evidence" value="ECO:0000316"/>
    <property type="project" value="SGD"/>
</dbReference>
<dbReference type="GO" id="GO:1903424">
    <property type="term" value="P:fluoride transmembrane transport"/>
    <property type="evidence" value="ECO:0000315"/>
    <property type="project" value="SGD"/>
</dbReference>
<dbReference type="InterPro" id="IPR003691">
    <property type="entry name" value="FluC"/>
</dbReference>
<dbReference type="PANTHER" id="PTHR28259">
    <property type="entry name" value="FLUORIDE EXPORT PROTEIN 1-RELATED"/>
    <property type="match status" value="1"/>
</dbReference>
<dbReference type="PANTHER" id="PTHR28259:SF1">
    <property type="entry name" value="FLUORIDE EXPORT PROTEIN 1-RELATED"/>
    <property type="match status" value="1"/>
</dbReference>
<dbReference type="Pfam" id="PF02537">
    <property type="entry name" value="CRCB"/>
    <property type="match status" value="1"/>
</dbReference>
<comment type="function">
    <text evidence="4">Fluoride channel required for the rapid expulsion of cytoplasmic fluoride.</text>
</comment>
<comment type="catalytic activity">
    <reaction evidence="5 8">
        <text>fluoride(in) = fluoride(out)</text>
        <dbReference type="Rhea" id="RHEA:76159"/>
        <dbReference type="ChEBI" id="CHEBI:17051"/>
    </reaction>
    <physiologicalReaction direction="left-to-right" evidence="5 8">
        <dbReference type="Rhea" id="RHEA:76160"/>
    </physiologicalReaction>
</comment>
<comment type="subcellular location">
    <subcellularLocation>
        <location evidence="5">Cell membrane</location>
        <topology evidence="2">Multi-pass membrane protein</topology>
    </subcellularLocation>
</comment>
<comment type="disruption phenotype">
    <text evidence="4">Highly sensible to fluoride, but not to other halide salts. The growth of a double deletion of both FEX1 and FEX2 is inhibited at almost a 1000-fold lower fluoride concentration than in the wild-type. Has increased intracellular fluoride concentrations.</text>
</comment>
<comment type="miscellaneous">
    <text evidence="5">Present with 220 molecules/cell in the plasma membrane.</text>
</comment>
<comment type="similarity">
    <text evidence="7">Belongs to the fluoride channel Fluc/FEX (TC 1.A.43) family.</text>
</comment>
<evidence type="ECO:0000250" key="1">
    <source>
        <dbReference type="UniProtKB" id="Q08913"/>
    </source>
</evidence>
<evidence type="ECO:0000255" key="2"/>
<evidence type="ECO:0000255" key="3">
    <source>
        <dbReference type="PROSITE-ProRule" id="PRU00498"/>
    </source>
</evidence>
<evidence type="ECO:0000269" key="4">
    <source>
    </source>
</evidence>
<evidence type="ECO:0000269" key="5">
    <source>
    </source>
</evidence>
<evidence type="ECO:0000303" key="6">
    <source>
    </source>
</evidence>
<evidence type="ECO:0000305" key="7"/>
<evidence type="ECO:0000305" key="8">
    <source>
    </source>
</evidence>
<evidence type="ECO:0000312" key="9">
    <source>
        <dbReference type="SGD" id="S000006200"/>
    </source>
</evidence>